<keyword id="KW-0963">Cytoplasm</keyword>
<keyword id="KW-0441">Lipid A biosynthesis</keyword>
<keyword id="KW-0444">Lipid biosynthesis</keyword>
<keyword id="KW-0443">Lipid metabolism</keyword>
<keyword id="KW-0456">Lyase</keyword>
<dbReference type="EC" id="4.2.1.59" evidence="1"/>
<dbReference type="EMBL" id="CP000094">
    <property type="protein sequence ID" value="ABA72855.1"/>
    <property type="molecule type" value="Genomic_DNA"/>
</dbReference>
<dbReference type="RefSeq" id="WP_003222142.1">
    <property type="nucleotide sequence ID" value="NC_007492.2"/>
</dbReference>
<dbReference type="SMR" id="Q3KHA1"/>
<dbReference type="GeneID" id="93487829"/>
<dbReference type="KEGG" id="pfo:Pfl01_1112"/>
<dbReference type="eggNOG" id="COG0764">
    <property type="taxonomic scope" value="Bacteria"/>
</dbReference>
<dbReference type="HOGENOM" id="CLU_078912_1_2_6"/>
<dbReference type="Proteomes" id="UP000002704">
    <property type="component" value="Chromosome"/>
</dbReference>
<dbReference type="GO" id="GO:0005737">
    <property type="term" value="C:cytoplasm"/>
    <property type="evidence" value="ECO:0007669"/>
    <property type="project" value="UniProtKB-SubCell"/>
</dbReference>
<dbReference type="GO" id="GO:0016020">
    <property type="term" value="C:membrane"/>
    <property type="evidence" value="ECO:0007669"/>
    <property type="project" value="GOC"/>
</dbReference>
<dbReference type="GO" id="GO:0019171">
    <property type="term" value="F:(3R)-hydroxyacyl-[acyl-carrier-protein] dehydratase activity"/>
    <property type="evidence" value="ECO:0007669"/>
    <property type="project" value="UniProtKB-EC"/>
</dbReference>
<dbReference type="GO" id="GO:0006633">
    <property type="term" value="P:fatty acid biosynthetic process"/>
    <property type="evidence" value="ECO:0007669"/>
    <property type="project" value="UniProtKB-UniRule"/>
</dbReference>
<dbReference type="GO" id="GO:0009245">
    <property type="term" value="P:lipid A biosynthetic process"/>
    <property type="evidence" value="ECO:0007669"/>
    <property type="project" value="UniProtKB-UniRule"/>
</dbReference>
<dbReference type="CDD" id="cd01288">
    <property type="entry name" value="FabZ"/>
    <property type="match status" value="1"/>
</dbReference>
<dbReference type="FunFam" id="3.10.129.10:FF:000001">
    <property type="entry name" value="3-hydroxyacyl-[acyl-carrier-protein] dehydratase FabZ"/>
    <property type="match status" value="1"/>
</dbReference>
<dbReference type="Gene3D" id="3.10.129.10">
    <property type="entry name" value="Hotdog Thioesterase"/>
    <property type="match status" value="1"/>
</dbReference>
<dbReference type="HAMAP" id="MF_00406">
    <property type="entry name" value="FabZ"/>
    <property type="match status" value="1"/>
</dbReference>
<dbReference type="InterPro" id="IPR013114">
    <property type="entry name" value="FabA_FabZ"/>
</dbReference>
<dbReference type="InterPro" id="IPR010084">
    <property type="entry name" value="FabZ"/>
</dbReference>
<dbReference type="InterPro" id="IPR029069">
    <property type="entry name" value="HotDog_dom_sf"/>
</dbReference>
<dbReference type="NCBIfam" id="TIGR01750">
    <property type="entry name" value="fabZ"/>
    <property type="match status" value="1"/>
</dbReference>
<dbReference type="NCBIfam" id="NF000582">
    <property type="entry name" value="PRK00006.1"/>
    <property type="match status" value="1"/>
</dbReference>
<dbReference type="PANTHER" id="PTHR30272">
    <property type="entry name" value="3-HYDROXYACYL-[ACYL-CARRIER-PROTEIN] DEHYDRATASE"/>
    <property type="match status" value="1"/>
</dbReference>
<dbReference type="PANTHER" id="PTHR30272:SF1">
    <property type="entry name" value="3-HYDROXYACYL-[ACYL-CARRIER-PROTEIN] DEHYDRATASE"/>
    <property type="match status" value="1"/>
</dbReference>
<dbReference type="Pfam" id="PF07977">
    <property type="entry name" value="FabA"/>
    <property type="match status" value="1"/>
</dbReference>
<dbReference type="SUPFAM" id="SSF54637">
    <property type="entry name" value="Thioesterase/thiol ester dehydrase-isomerase"/>
    <property type="match status" value="1"/>
</dbReference>
<gene>
    <name evidence="1" type="primary">fabZ</name>
    <name type="ordered locus">Pfl01_1112</name>
</gene>
<evidence type="ECO:0000255" key="1">
    <source>
        <dbReference type="HAMAP-Rule" id="MF_00406"/>
    </source>
</evidence>
<feature type="chain" id="PRO_0000230826" description="3-hydroxyacyl-[acyl-carrier-protein] dehydratase FabZ">
    <location>
        <begin position="1"/>
        <end position="146"/>
    </location>
</feature>
<feature type="active site" evidence="1">
    <location>
        <position position="49"/>
    </location>
</feature>
<accession>Q3KHA1</accession>
<name>FABZ_PSEPF</name>
<sequence length="146" mass="16659">MMDINEIREYLPHRYPFLLVDRVVELDTEGKRIRAYKNVSINEPFFNGHFPAHPIMPGVLIIEAMAQAAGILGFKMLDVKPADGTLYYFVGSDKLRFRQPVLPGDQLILEAKFISCKRQIWKFECQASVDGKPVCSAEIICAERKL</sequence>
<organism>
    <name type="scientific">Pseudomonas fluorescens (strain Pf0-1)</name>
    <dbReference type="NCBI Taxonomy" id="205922"/>
    <lineage>
        <taxon>Bacteria</taxon>
        <taxon>Pseudomonadati</taxon>
        <taxon>Pseudomonadota</taxon>
        <taxon>Gammaproteobacteria</taxon>
        <taxon>Pseudomonadales</taxon>
        <taxon>Pseudomonadaceae</taxon>
        <taxon>Pseudomonas</taxon>
    </lineage>
</organism>
<reference key="1">
    <citation type="journal article" date="2009" name="Genome Biol.">
        <title>Genomic and genetic analyses of diversity and plant interactions of Pseudomonas fluorescens.</title>
        <authorList>
            <person name="Silby M.W."/>
            <person name="Cerdeno-Tarraga A.M."/>
            <person name="Vernikos G.S."/>
            <person name="Giddens S.R."/>
            <person name="Jackson R.W."/>
            <person name="Preston G.M."/>
            <person name="Zhang X.-X."/>
            <person name="Moon C.D."/>
            <person name="Gehrig S.M."/>
            <person name="Godfrey S.A.C."/>
            <person name="Knight C.G."/>
            <person name="Malone J.G."/>
            <person name="Robinson Z."/>
            <person name="Spiers A.J."/>
            <person name="Harris S."/>
            <person name="Challis G.L."/>
            <person name="Yaxley A.M."/>
            <person name="Harris D."/>
            <person name="Seeger K."/>
            <person name="Murphy L."/>
            <person name="Rutter S."/>
            <person name="Squares R."/>
            <person name="Quail M.A."/>
            <person name="Saunders E."/>
            <person name="Mavromatis K."/>
            <person name="Brettin T.S."/>
            <person name="Bentley S.D."/>
            <person name="Hothersall J."/>
            <person name="Stephens E."/>
            <person name="Thomas C.M."/>
            <person name="Parkhill J."/>
            <person name="Levy S.B."/>
            <person name="Rainey P.B."/>
            <person name="Thomson N.R."/>
        </authorList>
    </citation>
    <scope>NUCLEOTIDE SEQUENCE [LARGE SCALE GENOMIC DNA]</scope>
    <source>
        <strain>Pf0-1</strain>
    </source>
</reference>
<proteinExistence type="inferred from homology"/>
<comment type="function">
    <text evidence="1">Involved in unsaturated fatty acids biosynthesis. Catalyzes the dehydration of short chain beta-hydroxyacyl-ACPs and long chain saturated and unsaturated beta-hydroxyacyl-ACPs.</text>
</comment>
<comment type="catalytic activity">
    <reaction evidence="1">
        <text>a (3R)-hydroxyacyl-[ACP] = a (2E)-enoyl-[ACP] + H2O</text>
        <dbReference type="Rhea" id="RHEA:13097"/>
        <dbReference type="Rhea" id="RHEA-COMP:9925"/>
        <dbReference type="Rhea" id="RHEA-COMP:9945"/>
        <dbReference type="ChEBI" id="CHEBI:15377"/>
        <dbReference type="ChEBI" id="CHEBI:78784"/>
        <dbReference type="ChEBI" id="CHEBI:78827"/>
        <dbReference type="EC" id="4.2.1.59"/>
    </reaction>
</comment>
<comment type="subcellular location">
    <subcellularLocation>
        <location evidence="1">Cytoplasm</location>
    </subcellularLocation>
</comment>
<comment type="similarity">
    <text evidence="1">Belongs to the thioester dehydratase family. FabZ subfamily.</text>
</comment>
<protein>
    <recommendedName>
        <fullName evidence="1">3-hydroxyacyl-[acyl-carrier-protein] dehydratase FabZ</fullName>
        <ecNumber evidence="1">4.2.1.59</ecNumber>
    </recommendedName>
    <alternativeName>
        <fullName evidence="1">(3R)-hydroxymyristoyl-[acyl-carrier-protein] dehydratase</fullName>
        <shortName evidence="1">(3R)-hydroxymyristoyl-ACP dehydrase</shortName>
    </alternativeName>
    <alternativeName>
        <fullName evidence="1">Beta-hydroxyacyl-ACP dehydratase</fullName>
    </alternativeName>
</protein>